<organism>
    <name type="scientific">Sulfolobus acidocaldarius (strain ATCC 33909 / DSM 639 / JCM 8929 / NBRC 15157 / NCIMB 11770)</name>
    <dbReference type="NCBI Taxonomy" id="330779"/>
    <lineage>
        <taxon>Archaea</taxon>
        <taxon>Thermoproteota</taxon>
        <taxon>Thermoprotei</taxon>
        <taxon>Sulfolobales</taxon>
        <taxon>Sulfolobaceae</taxon>
        <taxon>Sulfolobus</taxon>
    </lineage>
</organism>
<proteinExistence type="inferred from homology"/>
<evidence type="ECO:0000255" key="1">
    <source>
        <dbReference type="HAMAP-Rule" id="MF_00220"/>
    </source>
</evidence>
<comment type="function">
    <text evidence="1">Catalyzes the reversible cyclization of carbamoyl aspartate to dihydroorotate.</text>
</comment>
<comment type="catalytic activity">
    <reaction evidence="1">
        <text>(S)-dihydroorotate + H2O = N-carbamoyl-L-aspartate + H(+)</text>
        <dbReference type="Rhea" id="RHEA:24296"/>
        <dbReference type="ChEBI" id="CHEBI:15377"/>
        <dbReference type="ChEBI" id="CHEBI:15378"/>
        <dbReference type="ChEBI" id="CHEBI:30864"/>
        <dbReference type="ChEBI" id="CHEBI:32814"/>
        <dbReference type="EC" id="3.5.2.3"/>
    </reaction>
</comment>
<comment type="cofactor">
    <cofactor evidence="1">
        <name>Zn(2+)</name>
        <dbReference type="ChEBI" id="CHEBI:29105"/>
    </cofactor>
    <text evidence="1">Binds 2 Zn(2+) ions per subunit.</text>
</comment>
<comment type="pathway">
    <text evidence="1">Pyrimidine metabolism; UMP biosynthesis via de novo pathway; (S)-dihydroorotate from bicarbonate: step 3/3.</text>
</comment>
<comment type="similarity">
    <text evidence="1">Belongs to the metallo-dependent hydrolases superfamily. DHOase family. Class I DHOase subfamily.</text>
</comment>
<sequence>MWIKGKAYYEGEIKEICINFDRSIKEIRANCKPDMTFTNEELILPASVDLHVHVRGAQLSYKETVATATSEAVYGGVGVIVDMPNTVPYINTPERIKERLREFQLYSRTDYGIYSGVSKEVEEIDKLPIAGYKIYPEDLEKEETRYVLEKSKKLKILHPEMPFVSKIERSLRRSYWMETAAINLVKGNMHITHITNFETLQLAKSMGFTTDITAHHLVVDGERDCISKVNPPIRDYVTRLKLFLKGLFEVDCIASDHAPHSKEEKRMNFDLCPPGIAGVSFSTPYIYSLMFKGLISIDRAVSLLSGNPSRILNIPTGKIKEGYRANFTVIKRENWRYTTKFSKVTETPMDGFSLDAKVTNVIVEGKLAFDGENVYPIRGVNIFDSSSRS</sequence>
<keyword id="KW-0378">Hydrolase</keyword>
<keyword id="KW-0479">Metal-binding</keyword>
<keyword id="KW-0665">Pyrimidine biosynthesis</keyword>
<keyword id="KW-1185">Reference proteome</keyword>
<keyword id="KW-0862">Zinc</keyword>
<accession>O08357</accession>
<accession>Q4J8H3</accession>
<accession>Q8NKP6</accession>
<name>PYRC_SULAC</name>
<gene>
    <name evidence="1" type="primary">pyrC</name>
    <name type="ordered locus">Saci_1593</name>
</gene>
<reference key="1">
    <citation type="journal article" date="2002" name="J. Bacteriol.">
        <title>Genes of de novo pyrimidine biosynthesis from the hyperthermoacidophilic crenarchaeote Sulfolobus acidocaldarius: novel organization in a bipolar operon.</title>
        <authorList>
            <person name="Thia-Toong T.-L."/>
            <person name="Roovers M."/>
            <person name="Durbecq V."/>
            <person name="Gigot D."/>
            <person name="Glansdorff N."/>
            <person name="Charlier D.R.M."/>
        </authorList>
    </citation>
    <scope>NUCLEOTIDE SEQUENCE [GENOMIC DNA]</scope>
    <source>
        <strain>ATCC 33909 / DSM 639 / JCM 8929 / NBRC 15157 / NCIMB 11770</strain>
    </source>
</reference>
<reference key="2">
    <citation type="journal article" date="2005" name="J. Bacteriol.">
        <title>The genome of Sulfolobus acidocaldarius, a model organism of the Crenarchaeota.</title>
        <authorList>
            <person name="Chen L."/>
            <person name="Bruegger K."/>
            <person name="Skovgaard M."/>
            <person name="Redder P."/>
            <person name="She Q."/>
            <person name="Torarinsson E."/>
            <person name="Greve B."/>
            <person name="Awayez M."/>
            <person name="Zibat A."/>
            <person name="Klenk H.-P."/>
            <person name="Garrett R.A."/>
        </authorList>
    </citation>
    <scope>NUCLEOTIDE SEQUENCE [LARGE SCALE GENOMIC DNA]</scope>
    <source>
        <strain>ATCC 33909 / DSM 639 / JCM 8929 / NBRC 15157 / NCIMB 11770</strain>
    </source>
</reference>
<reference key="3">
    <citation type="submission" date="1997-04" db="EMBL/GenBank/DDBJ databases">
        <authorList>
            <person name="Charlier D.R.M."/>
            <person name="Thia-Toong T.-L."/>
            <person name="Roovers M."/>
            <person name="Durbecq V."/>
            <person name="Legrain C."/>
            <person name="Glansdorff N."/>
        </authorList>
    </citation>
    <scope>NUCLEOTIDE SEQUENCE [GENOMIC DNA] OF 35-389</scope>
    <source>
        <strain>ATCC 33909 / DSM 639 / JCM 8929 / NBRC 15157 / NCIMB 11770</strain>
    </source>
</reference>
<protein>
    <recommendedName>
        <fullName evidence="1">Dihydroorotase</fullName>
        <shortName evidence="1">DHOase</shortName>
        <ecNumber evidence="1">3.5.2.3</ecNumber>
    </recommendedName>
</protein>
<dbReference type="EC" id="3.5.2.3" evidence="1"/>
<dbReference type="EMBL" id="AJ459777">
    <property type="protein sequence ID" value="CAD31979.1"/>
    <property type="molecule type" value="Genomic_DNA"/>
</dbReference>
<dbReference type="EMBL" id="CP000077">
    <property type="protein sequence ID" value="AAY80906.1"/>
    <property type="molecule type" value="Genomic_DNA"/>
</dbReference>
<dbReference type="EMBL" id="Y12823">
    <property type="protein sequence ID" value="CAA73353.1"/>
    <property type="molecule type" value="Genomic_DNA"/>
</dbReference>
<dbReference type="RefSeq" id="WP_011278408.1">
    <property type="nucleotide sequence ID" value="NC_007181.1"/>
</dbReference>
<dbReference type="SMR" id="O08357"/>
<dbReference type="STRING" id="330779.Saci_1593"/>
<dbReference type="GeneID" id="14552086"/>
<dbReference type="GeneID" id="78441936"/>
<dbReference type="KEGG" id="sai:Saci_1593"/>
<dbReference type="PATRIC" id="fig|330779.12.peg.1533"/>
<dbReference type="eggNOG" id="arCOG00689">
    <property type="taxonomic scope" value="Archaea"/>
</dbReference>
<dbReference type="HOGENOM" id="CLU_015572_1_1_2"/>
<dbReference type="UniPathway" id="UPA00070">
    <property type="reaction ID" value="UER00117"/>
</dbReference>
<dbReference type="Proteomes" id="UP000001018">
    <property type="component" value="Chromosome"/>
</dbReference>
<dbReference type="GO" id="GO:0005737">
    <property type="term" value="C:cytoplasm"/>
    <property type="evidence" value="ECO:0007669"/>
    <property type="project" value="TreeGrafter"/>
</dbReference>
<dbReference type="GO" id="GO:0004038">
    <property type="term" value="F:allantoinase activity"/>
    <property type="evidence" value="ECO:0007669"/>
    <property type="project" value="TreeGrafter"/>
</dbReference>
<dbReference type="GO" id="GO:0004151">
    <property type="term" value="F:dihydroorotase activity"/>
    <property type="evidence" value="ECO:0007669"/>
    <property type="project" value="UniProtKB-UniRule"/>
</dbReference>
<dbReference type="GO" id="GO:0008270">
    <property type="term" value="F:zinc ion binding"/>
    <property type="evidence" value="ECO:0007669"/>
    <property type="project" value="UniProtKB-UniRule"/>
</dbReference>
<dbReference type="GO" id="GO:0044205">
    <property type="term" value="P:'de novo' UMP biosynthetic process"/>
    <property type="evidence" value="ECO:0007669"/>
    <property type="project" value="UniProtKB-UniRule"/>
</dbReference>
<dbReference type="GO" id="GO:0006145">
    <property type="term" value="P:purine nucleobase catabolic process"/>
    <property type="evidence" value="ECO:0007669"/>
    <property type="project" value="TreeGrafter"/>
</dbReference>
<dbReference type="Gene3D" id="3.20.20.140">
    <property type="entry name" value="Metal-dependent hydrolases"/>
    <property type="match status" value="1"/>
</dbReference>
<dbReference type="HAMAP" id="MF_00220_A">
    <property type="entry name" value="PyrC_classI_A"/>
    <property type="match status" value="1"/>
</dbReference>
<dbReference type="InterPro" id="IPR006680">
    <property type="entry name" value="Amidohydro-rel"/>
</dbReference>
<dbReference type="InterPro" id="IPR004722">
    <property type="entry name" value="DHOase"/>
</dbReference>
<dbReference type="InterPro" id="IPR050138">
    <property type="entry name" value="DHOase/Allantoinase_Hydrolase"/>
</dbReference>
<dbReference type="InterPro" id="IPR002195">
    <property type="entry name" value="Dihydroorotase_CS"/>
</dbReference>
<dbReference type="InterPro" id="IPR011059">
    <property type="entry name" value="Metal-dep_hydrolase_composite"/>
</dbReference>
<dbReference type="InterPro" id="IPR032466">
    <property type="entry name" value="Metal_Hydrolase"/>
</dbReference>
<dbReference type="NCBIfam" id="NF001541">
    <property type="entry name" value="PRK00369.1"/>
    <property type="match status" value="1"/>
</dbReference>
<dbReference type="PANTHER" id="PTHR43668">
    <property type="entry name" value="ALLANTOINASE"/>
    <property type="match status" value="1"/>
</dbReference>
<dbReference type="PANTHER" id="PTHR43668:SF2">
    <property type="entry name" value="ALLANTOINASE"/>
    <property type="match status" value="1"/>
</dbReference>
<dbReference type="Pfam" id="PF01979">
    <property type="entry name" value="Amidohydro_1"/>
    <property type="match status" value="1"/>
</dbReference>
<dbReference type="SUPFAM" id="SSF51338">
    <property type="entry name" value="Composite domain of metallo-dependent hydrolases"/>
    <property type="match status" value="1"/>
</dbReference>
<dbReference type="SUPFAM" id="SSF51556">
    <property type="entry name" value="Metallo-dependent hydrolases"/>
    <property type="match status" value="1"/>
</dbReference>
<dbReference type="PROSITE" id="PS00482">
    <property type="entry name" value="DIHYDROOROTASE_1"/>
    <property type="match status" value="1"/>
</dbReference>
<dbReference type="PROSITE" id="PS00483">
    <property type="entry name" value="DIHYDROOROTASE_2"/>
    <property type="match status" value="1"/>
</dbReference>
<feature type="chain" id="PRO_0000147279" description="Dihydroorotase">
    <location>
        <begin position="1"/>
        <end position="389"/>
    </location>
</feature>
<feature type="active site" evidence="1">
    <location>
        <position position="256"/>
    </location>
</feature>
<feature type="binding site" evidence="1">
    <location>
        <position position="51"/>
    </location>
    <ligand>
        <name>Zn(2+)</name>
        <dbReference type="ChEBI" id="CHEBI:29105"/>
        <label>1</label>
    </ligand>
</feature>
<feature type="binding site" evidence="1">
    <location>
        <begin position="53"/>
        <end position="55"/>
    </location>
    <ligand>
        <name>substrate</name>
    </ligand>
</feature>
<feature type="binding site" evidence="1">
    <location>
        <position position="53"/>
    </location>
    <ligand>
        <name>Zn(2+)</name>
        <dbReference type="ChEBI" id="CHEBI:29105"/>
        <label>1</label>
    </ligand>
</feature>
<feature type="binding site" evidence="1">
    <location>
        <position position="85"/>
    </location>
    <ligand>
        <name>substrate</name>
    </ligand>
</feature>
<feature type="binding site" evidence="1">
    <location>
        <position position="133"/>
    </location>
    <ligand>
        <name>Zn(2+)</name>
        <dbReference type="ChEBI" id="CHEBI:29105"/>
        <label>1</label>
    </ligand>
</feature>
<feature type="binding site" evidence="1">
    <location>
        <position position="133"/>
    </location>
    <ligand>
        <name>Zn(2+)</name>
        <dbReference type="ChEBI" id="CHEBI:29105"/>
        <label>2</label>
    </ligand>
</feature>
<feature type="binding site" evidence="1">
    <location>
        <position position="158"/>
    </location>
    <ligand>
        <name>Zn(2+)</name>
        <dbReference type="ChEBI" id="CHEBI:29105"/>
        <label>2</label>
    </ligand>
</feature>
<feature type="binding site" evidence="1">
    <location>
        <position position="193"/>
    </location>
    <ligand>
        <name>Zn(2+)</name>
        <dbReference type="ChEBI" id="CHEBI:29105"/>
        <label>2</label>
    </ligand>
</feature>
<feature type="binding site" evidence="1">
    <location>
        <position position="256"/>
    </location>
    <ligand>
        <name>Zn(2+)</name>
        <dbReference type="ChEBI" id="CHEBI:29105"/>
        <label>1</label>
    </ligand>
</feature>
<feature type="binding site" evidence="1">
    <location>
        <position position="260"/>
    </location>
    <ligand>
        <name>substrate</name>
    </ligand>
</feature>
<feature type="binding site" evidence="1">
    <location>
        <begin position="274"/>
        <end position="275"/>
    </location>
    <ligand>
        <name>substrate</name>
    </ligand>
</feature>
<feature type="modified residue" description="N6-carboxylysine" evidence="1">
    <location>
        <position position="133"/>
    </location>
</feature>